<sequence length="426" mass="47356">MSIEVDWKTATSGPDGEALAERIRSFIHDKFQQVALPRFIRSVQVHSFDFGTVPPDLEIKDFCEPFADFYEEDEDDETSEVSEELVSAHGNQWHRTHSELNEPPYRDEVTMNQPLRDPFDEGFHPSPLRSPMEHLNPHFLPRAGTPGIPGGTSTIGYHLMSLGGLSGTQTPLAAVAGGTPFANGWTDHNLGPGNRGHASGPAAGAMRQHRPEDIDSSNPTSRPSTSSTLPSHPSGSNRNSGDGSHPEEEHLDDPAEPDHPFRFPKMRERRPEDFQVMCRAKYAGDVRLSLTAEILLDYPMPSFVGLPLKLNITGVTFDGVAVVAYIRKRVNFCFLSAEDADALIGADDQETRDKDDHPRSGLDPTTSPKRQGGLLREIRVESEIGRKEDGKQVLKNVGKVERFVLAQVRRIFEEELVFPSFWTFLI</sequence>
<gene>
    <name evidence="1" type="primary">mdm12</name>
    <name type="ORF">ATEG_00869</name>
</gene>
<accession>Q0CZL5</accession>
<proteinExistence type="inferred from homology"/>
<name>MDM12_ASPTN</name>
<organism>
    <name type="scientific">Aspergillus terreus (strain NIH 2624 / FGSC A1156)</name>
    <dbReference type="NCBI Taxonomy" id="341663"/>
    <lineage>
        <taxon>Eukaryota</taxon>
        <taxon>Fungi</taxon>
        <taxon>Dikarya</taxon>
        <taxon>Ascomycota</taxon>
        <taxon>Pezizomycotina</taxon>
        <taxon>Eurotiomycetes</taxon>
        <taxon>Eurotiomycetidae</taxon>
        <taxon>Eurotiales</taxon>
        <taxon>Aspergillaceae</taxon>
        <taxon>Aspergillus</taxon>
        <taxon>Aspergillus subgen. Circumdati</taxon>
    </lineage>
</organism>
<evidence type="ECO:0000255" key="1">
    <source>
        <dbReference type="HAMAP-Rule" id="MF_03104"/>
    </source>
</evidence>
<evidence type="ECO:0000256" key="2">
    <source>
        <dbReference type="SAM" id="MobiDB-lite"/>
    </source>
</evidence>
<evidence type="ECO:0000305" key="3"/>
<feature type="chain" id="PRO_0000384274" description="Mitochondrial distribution and morphology protein 12">
    <location>
        <begin position="1"/>
        <end position="426"/>
    </location>
</feature>
<feature type="domain" description="SMP-LTD" evidence="1">
    <location>
        <begin position="1"/>
        <end position="426"/>
    </location>
</feature>
<feature type="region of interest" description="Disordered" evidence="2">
    <location>
        <begin position="88"/>
        <end position="147"/>
    </location>
</feature>
<feature type="region of interest" description="Disordered" evidence="2">
    <location>
        <begin position="185"/>
        <end position="264"/>
    </location>
</feature>
<feature type="region of interest" description="Disordered" evidence="2">
    <location>
        <begin position="346"/>
        <end position="370"/>
    </location>
</feature>
<feature type="compositionally biased region" description="Basic and acidic residues" evidence="2">
    <location>
        <begin position="96"/>
        <end position="109"/>
    </location>
</feature>
<feature type="compositionally biased region" description="Low complexity" evidence="2">
    <location>
        <begin position="216"/>
        <end position="236"/>
    </location>
</feature>
<feature type="compositionally biased region" description="Basic and acidic residues" evidence="2">
    <location>
        <begin position="244"/>
        <end position="264"/>
    </location>
</feature>
<feature type="compositionally biased region" description="Basic and acidic residues" evidence="2">
    <location>
        <begin position="349"/>
        <end position="360"/>
    </location>
</feature>
<protein>
    <recommendedName>
        <fullName evidence="1">Mitochondrial distribution and morphology protein 12</fullName>
    </recommendedName>
    <alternativeName>
        <fullName evidence="1">Mitochondrial inheritance component MDM12</fullName>
    </alternativeName>
</protein>
<dbReference type="EMBL" id="CH476594">
    <property type="protein sequence ID" value="EAU39515.1"/>
    <property type="status" value="ALT_SEQ"/>
    <property type="molecule type" value="Genomic_DNA"/>
</dbReference>
<dbReference type="RefSeq" id="XP_001210955.1">
    <property type="nucleotide sequence ID" value="XM_001210955.1"/>
</dbReference>
<dbReference type="SMR" id="Q0CZL5"/>
<dbReference type="STRING" id="341663.Q0CZL5"/>
<dbReference type="GeneID" id="4355630"/>
<dbReference type="eggNOG" id="ENOG502S3PB">
    <property type="taxonomic scope" value="Eukaryota"/>
</dbReference>
<dbReference type="OrthoDB" id="3356905at2759"/>
<dbReference type="Proteomes" id="UP000007963">
    <property type="component" value="Unassembled WGS sequence"/>
</dbReference>
<dbReference type="GO" id="GO:0005789">
    <property type="term" value="C:endoplasmic reticulum membrane"/>
    <property type="evidence" value="ECO:0007669"/>
    <property type="project" value="UniProtKB-SubCell"/>
</dbReference>
<dbReference type="GO" id="GO:0032865">
    <property type="term" value="C:ERMES complex"/>
    <property type="evidence" value="ECO:0007669"/>
    <property type="project" value="UniProtKB-UniRule"/>
</dbReference>
<dbReference type="GO" id="GO:0008289">
    <property type="term" value="F:lipid binding"/>
    <property type="evidence" value="ECO:0007669"/>
    <property type="project" value="UniProtKB-KW"/>
</dbReference>
<dbReference type="GO" id="GO:0000002">
    <property type="term" value="P:mitochondrial genome maintenance"/>
    <property type="evidence" value="ECO:0007669"/>
    <property type="project" value="UniProtKB-UniRule"/>
</dbReference>
<dbReference type="GO" id="GO:1990456">
    <property type="term" value="P:mitochondrion-endoplasmic reticulum membrane tethering"/>
    <property type="evidence" value="ECO:0007669"/>
    <property type="project" value="TreeGrafter"/>
</dbReference>
<dbReference type="GO" id="GO:0015914">
    <property type="term" value="P:phospholipid transport"/>
    <property type="evidence" value="ECO:0007669"/>
    <property type="project" value="TreeGrafter"/>
</dbReference>
<dbReference type="GO" id="GO:0045040">
    <property type="term" value="P:protein insertion into mitochondrial outer membrane"/>
    <property type="evidence" value="ECO:0007669"/>
    <property type="project" value="UniProtKB-UniRule"/>
</dbReference>
<dbReference type="CDD" id="cd21672">
    <property type="entry name" value="SMP_Mdm12"/>
    <property type="match status" value="1"/>
</dbReference>
<dbReference type="HAMAP" id="MF_03104">
    <property type="entry name" value="Mdm12"/>
    <property type="match status" value="1"/>
</dbReference>
<dbReference type="InterPro" id="IPR027532">
    <property type="entry name" value="Mdm12"/>
</dbReference>
<dbReference type="InterPro" id="IPR019411">
    <property type="entry name" value="MMM1_dom"/>
</dbReference>
<dbReference type="InterPro" id="IPR031468">
    <property type="entry name" value="SMP_LBD"/>
</dbReference>
<dbReference type="PANTHER" id="PTHR28204">
    <property type="entry name" value="MITOCHONDRIAL DISTRIBUTION AND MORPHOLOGY PROTEIN 12"/>
    <property type="match status" value="1"/>
</dbReference>
<dbReference type="PANTHER" id="PTHR28204:SF1">
    <property type="entry name" value="MITOCHONDRIAL DISTRIBUTION AND MORPHOLOGY PROTEIN 12"/>
    <property type="match status" value="1"/>
</dbReference>
<dbReference type="Pfam" id="PF10296">
    <property type="entry name" value="MMM1"/>
    <property type="match status" value="1"/>
</dbReference>
<dbReference type="PROSITE" id="PS51847">
    <property type="entry name" value="SMP"/>
    <property type="match status" value="1"/>
</dbReference>
<keyword id="KW-0256">Endoplasmic reticulum</keyword>
<keyword id="KW-0445">Lipid transport</keyword>
<keyword id="KW-0446">Lipid-binding</keyword>
<keyword id="KW-0472">Membrane</keyword>
<keyword id="KW-0496">Mitochondrion</keyword>
<keyword id="KW-1000">Mitochondrion outer membrane</keyword>
<keyword id="KW-1185">Reference proteome</keyword>
<keyword id="KW-0813">Transport</keyword>
<reference key="1">
    <citation type="submission" date="2005-09" db="EMBL/GenBank/DDBJ databases">
        <title>Annotation of the Aspergillus terreus NIH2624 genome.</title>
        <authorList>
            <person name="Birren B.W."/>
            <person name="Lander E.S."/>
            <person name="Galagan J.E."/>
            <person name="Nusbaum C."/>
            <person name="Devon K."/>
            <person name="Henn M."/>
            <person name="Ma L.-J."/>
            <person name="Jaffe D.B."/>
            <person name="Butler J."/>
            <person name="Alvarez P."/>
            <person name="Gnerre S."/>
            <person name="Grabherr M."/>
            <person name="Kleber M."/>
            <person name="Mauceli E.W."/>
            <person name="Brockman W."/>
            <person name="Rounsley S."/>
            <person name="Young S.K."/>
            <person name="LaButti K."/>
            <person name="Pushparaj V."/>
            <person name="DeCaprio D."/>
            <person name="Crawford M."/>
            <person name="Koehrsen M."/>
            <person name="Engels R."/>
            <person name="Montgomery P."/>
            <person name="Pearson M."/>
            <person name="Howarth C."/>
            <person name="Larson L."/>
            <person name="Luoma S."/>
            <person name="White J."/>
            <person name="Alvarado L."/>
            <person name="Kodira C.D."/>
            <person name="Zeng Q."/>
            <person name="Oleary S."/>
            <person name="Yandava C."/>
            <person name="Denning D.W."/>
            <person name="Nierman W.C."/>
            <person name="Milne T."/>
            <person name="Madden K."/>
        </authorList>
    </citation>
    <scope>NUCLEOTIDE SEQUENCE [LARGE SCALE GENOMIC DNA]</scope>
    <source>
        <strain>NIH 2624 / FGSC A1156</strain>
    </source>
</reference>
<comment type="function">
    <text evidence="1">Component of the ERMES/MDM complex, which serves as a molecular tether to connect the endoplasmic reticulum (ER) and mitochondria. Components of this complex are involved in the control of mitochondrial shape and protein biogenesis, and function in nonvesicular lipid trafficking between the ER and mitochondria. Mdm12 is required for the interaction of the ER-resident membrane protein mmm1 and the outer mitochondrial membrane-resident beta-barrel protein mdm10. The mdm12-mmm1 subcomplex functions in the major beta-barrel assembly pathway that is responsible for biogenesis of all mitochondrial outer membrane beta-barrel proteins, and acts in a late step after the SAM complex. The mdm10-mdm12-mmm1 subcomplex further acts in the TOM40-specific pathway after the action of the mdm12-mmm1 complex. Essential for establishing and maintaining the structure of mitochondria and maintenance of mtDNA nucleoids.</text>
</comment>
<comment type="subunit">
    <text evidence="1">Component of the ER-mitochondria encounter structure (ERMES) or MDM complex, composed of mmm1, mdm10, mdm12 and mdm34. A mmm1 homodimer associates with one molecule of mdm12 on each side in a pairwise head-to-tail manner, and the SMP-LTD domains of mmm1 and mdm12 generate a continuous hydrophobic tunnel for phospholipid trafficking.</text>
</comment>
<comment type="subcellular location">
    <subcellularLocation>
        <location evidence="1">Mitochondrion outer membrane</location>
        <topology evidence="1">Peripheral membrane protein</topology>
        <orientation evidence="1">Cytoplasmic side</orientation>
    </subcellularLocation>
    <subcellularLocation>
        <location evidence="1">Endoplasmic reticulum membrane</location>
        <topology evidence="1">Peripheral membrane protein</topology>
        <orientation evidence="1">Cytoplasmic side</orientation>
    </subcellularLocation>
    <text evidence="1">The ERMES/MDM complex localizes to a few discrete foci (around 10 per single cell), that represent mitochondria-endoplasmic reticulum junctions. These foci are often found next to mtDNA nucleoids.</text>
</comment>
<comment type="domain">
    <text evidence="1">The SMP-LTD domain is a barrel-like domain that can bind various types of glycerophospholipids in its interior and mediate their transfer between two adjacent bilayers.</text>
</comment>
<comment type="similarity">
    <text evidence="1">Belongs to the MDM12 family.</text>
</comment>
<comment type="sequence caution" evidence="3">
    <conflict type="erroneous gene model prediction">
        <sequence resource="EMBL-CDS" id="EAU39515"/>
    </conflict>
</comment>